<keyword id="KW-0312">Gluconeogenesis</keyword>
<keyword id="KW-0324">Glycolysis</keyword>
<keyword id="KW-0413">Isomerase</keyword>
<feature type="chain" id="PRO_1000149537" description="2,3-bisphosphoglycerate-dependent phosphoglycerate mutase">
    <location>
        <begin position="1"/>
        <end position="230"/>
    </location>
</feature>
<feature type="active site" description="Tele-phosphohistidine intermediate" evidence="1">
    <location>
        <position position="9"/>
    </location>
</feature>
<feature type="active site" description="Proton donor/acceptor" evidence="1">
    <location>
        <position position="87"/>
    </location>
</feature>
<feature type="binding site" evidence="1">
    <location>
        <begin position="8"/>
        <end position="15"/>
    </location>
    <ligand>
        <name>substrate</name>
    </ligand>
</feature>
<feature type="binding site" evidence="1">
    <location>
        <begin position="21"/>
        <end position="22"/>
    </location>
    <ligand>
        <name>substrate</name>
    </ligand>
</feature>
<feature type="binding site" evidence="1">
    <location>
        <position position="60"/>
    </location>
    <ligand>
        <name>substrate</name>
    </ligand>
</feature>
<feature type="binding site" evidence="1">
    <location>
        <begin position="87"/>
        <end position="90"/>
    </location>
    <ligand>
        <name>substrate</name>
    </ligand>
</feature>
<feature type="binding site" evidence="1">
    <location>
        <position position="98"/>
    </location>
    <ligand>
        <name>substrate</name>
    </ligand>
</feature>
<feature type="binding site" evidence="1">
    <location>
        <begin position="114"/>
        <end position="115"/>
    </location>
    <ligand>
        <name>substrate</name>
    </ligand>
</feature>
<feature type="binding site" evidence="1">
    <location>
        <begin position="183"/>
        <end position="184"/>
    </location>
    <ligand>
        <name>substrate</name>
    </ligand>
</feature>
<feature type="site" description="Transition state stabilizer" evidence="1">
    <location>
        <position position="182"/>
    </location>
</feature>
<gene>
    <name evidence="1" type="primary">gpmA</name>
    <name type="ordered locus">SPT_1595</name>
</gene>
<reference key="1">
    <citation type="journal article" date="2010" name="Genome Biol.">
        <title>Structure and dynamics of the pan-genome of Streptococcus pneumoniae and closely related species.</title>
        <authorList>
            <person name="Donati C."/>
            <person name="Hiller N.L."/>
            <person name="Tettelin H."/>
            <person name="Muzzi A."/>
            <person name="Croucher N.J."/>
            <person name="Angiuoli S.V."/>
            <person name="Oggioni M."/>
            <person name="Dunning Hotopp J.C."/>
            <person name="Hu F.Z."/>
            <person name="Riley D.R."/>
            <person name="Covacci A."/>
            <person name="Mitchell T.J."/>
            <person name="Bentley S.D."/>
            <person name="Kilian M."/>
            <person name="Ehrlich G.D."/>
            <person name="Rappuoli R."/>
            <person name="Moxon E.R."/>
            <person name="Masignani V."/>
        </authorList>
    </citation>
    <scope>NUCLEOTIDE SEQUENCE [LARGE SCALE GENOMIC DNA]</scope>
    <source>
        <strain>Taiwan19F-14</strain>
    </source>
</reference>
<protein>
    <recommendedName>
        <fullName evidence="1">2,3-bisphosphoglycerate-dependent phosphoglycerate mutase</fullName>
        <shortName evidence="1">BPG-dependent PGAM</shortName>
        <shortName evidence="1">PGAM</shortName>
        <shortName evidence="1">Phosphoglyceromutase</shortName>
        <shortName evidence="1">dPGM</shortName>
        <ecNumber evidence="1">5.4.2.11</ecNumber>
    </recommendedName>
</protein>
<sequence length="230" mass="26050">MVKLVFARHGESEWNKANLFTGWADVDLSEKGTQQAIDAGKLIKEAGIKFDQAYTSVLKRAIKTTNLALEASDQLWVPVEKSWRLNERHYGGLTGKNKAEAAEQFGDEQVHIWRRSYDVLPPNMDRDDEHSAHTDRRYASLDDSVIPDAENLKVTLERALPFWEDKIAPALKDGKNVFVGAHGNSIRALVKHIKGLSDDEIMDVEIPNFPPLVFEFDEKLNVVSEYYLGK</sequence>
<proteinExistence type="inferred from homology"/>
<accession>C1CSS1</accession>
<dbReference type="EC" id="5.4.2.11" evidence="1"/>
<dbReference type="EMBL" id="CP000921">
    <property type="protein sequence ID" value="ACO22726.1"/>
    <property type="molecule type" value="Genomic_DNA"/>
</dbReference>
<dbReference type="RefSeq" id="WP_000240132.1">
    <property type="nucleotide sequence ID" value="NC_012469.1"/>
</dbReference>
<dbReference type="SMR" id="C1CSS1"/>
<dbReference type="KEGG" id="snt:SPT_1595"/>
<dbReference type="HOGENOM" id="CLU_033323_1_5_9"/>
<dbReference type="UniPathway" id="UPA00109">
    <property type="reaction ID" value="UER00186"/>
</dbReference>
<dbReference type="GO" id="GO:0004619">
    <property type="term" value="F:phosphoglycerate mutase activity"/>
    <property type="evidence" value="ECO:0007669"/>
    <property type="project" value="UniProtKB-EC"/>
</dbReference>
<dbReference type="GO" id="GO:0006094">
    <property type="term" value="P:gluconeogenesis"/>
    <property type="evidence" value="ECO:0007669"/>
    <property type="project" value="UniProtKB-UniRule"/>
</dbReference>
<dbReference type="GO" id="GO:0006096">
    <property type="term" value="P:glycolytic process"/>
    <property type="evidence" value="ECO:0007669"/>
    <property type="project" value="UniProtKB-UniRule"/>
</dbReference>
<dbReference type="CDD" id="cd07067">
    <property type="entry name" value="HP_PGM_like"/>
    <property type="match status" value="1"/>
</dbReference>
<dbReference type="FunFam" id="3.40.50.1240:FF:000003">
    <property type="entry name" value="2,3-bisphosphoglycerate-dependent phosphoglycerate mutase"/>
    <property type="match status" value="1"/>
</dbReference>
<dbReference type="Gene3D" id="3.40.50.1240">
    <property type="entry name" value="Phosphoglycerate mutase-like"/>
    <property type="match status" value="1"/>
</dbReference>
<dbReference type="HAMAP" id="MF_01039">
    <property type="entry name" value="PGAM_GpmA"/>
    <property type="match status" value="1"/>
</dbReference>
<dbReference type="InterPro" id="IPR013078">
    <property type="entry name" value="His_Pase_superF_clade-1"/>
</dbReference>
<dbReference type="InterPro" id="IPR029033">
    <property type="entry name" value="His_PPase_superfam"/>
</dbReference>
<dbReference type="InterPro" id="IPR005952">
    <property type="entry name" value="Phosphogly_mut1"/>
</dbReference>
<dbReference type="NCBIfam" id="TIGR01258">
    <property type="entry name" value="pgm_1"/>
    <property type="match status" value="1"/>
</dbReference>
<dbReference type="NCBIfam" id="NF010713">
    <property type="entry name" value="PRK14115.1"/>
    <property type="match status" value="1"/>
</dbReference>
<dbReference type="NCBIfam" id="NF010715">
    <property type="entry name" value="PRK14117.1"/>
    <property type="match status" value="1"/>
</dbReference>
<dbReference type="PANTHER" id="PTHR11931">
    <property type="entry name" value="PHOSPHOGLYCERATE MUTASE"/>
    <property type="match status" value="1"/>
</dbReference>
<dbReference type="Pfam" id="PF00300">
    <property type="entry name" value="His_Phos_1"/>
    <property type="match status" value="1"/>
</dbReference>
<dbReference type="PIRSF" id="PIRSF000709">
    <property type="entry name" value="6PFK_2-Ptase"/>
    <property type="match status" value="1"/>
</dbReference>
<dbReference type="SMART" id="SM00855">
    <property type="entry name" value="PGAM"/>
    <property type="match status" value="1"/>
</dbReference>
<dbReference type="SUPFAM" id="SSF53254">
    <property type="entry name" value="Phosphoglycerate mutase-like"/>
    <property type="match status" value="1"/>
</dbReference>
<evidence type="ECO:0000255" key="1">
    <source>
        <dbReference type="HAMAP-Rule" id="MF_01039"/>
    </source>
</evidence>
<organism>
    <name type="scientific">Streptococcus pneumoniae (strain Taiwan19F-14)</name>
    <dbReference type="NCBI Taxonomy" id="487213"/>
    <lineage>
        <taxon>Bacteria</taxon>
        <taxon>Bacillati</taxon>
        <taxon>Bacillota</taxon>
        <taxon>Bacilli</taxon>
        <taxon>Lactobacillales</taxon>
        <taxon>Streptococcaceae</taxon>
        <taxon>Streptococcus</taxon>
    </lineage>
</organism>
<comment type="function">
    <text evidence="1">Catalyzes the interconversion of 2-phosphoglycerate and 3-phosphoglycerate.</text>
</comment>
<comment type="catalytic activity">
    <reaction evidence="1">
        <text>(2R)-2-phosphoglycerate = (2R)-3-phosphoglycerate</text>
        <dbReference type="Rhea" id="RHEA:15901"/>
        <dbReference type="ChEBI" id="CHEBI:58272"/>
        <dbReference type="ChEBI" id="CHEBI:58289"/>
        <dbReference type="EC" id="5.4.2.11"/>
    </reaction>
</comment>
<comment type="pathway">
    <text evidence="1">Carbohydrate degradation; glycolysis; pyruvate from D-glyceraldehyde 3-phosphate: step 3/5.</text>
</comment>
<comment type="similarity">
    <text evidence="1">Belongs to the phosphoglycerate mutase family. BPG-dependent PGAM subfamily.</text>
</comment>
<name>GPMA_STRZT</name>